<sequence>MKYQQLENLECGWKWQYLINKWKDGETITKYIDSSEADHAVSELRKLEHEPTKVLEWIDLHMAEELDKKLKQAIRGKRKRHFNAEQIHTKKKSIDLDYRVWEKLSTRANELGCTLSDAIEYLLSEASRSEKASAAVSTLKEDLSKLLSD</sequence>
<accession>Q8D9H5</accession>
<reference key="1">
    <citation type="submission" date="2002-12" db="EMBL/GenBank/DDBJ databases">
        <title>Complete genome sequence of Vibrio vulnificus CMCP6.</title>
        <authorList>
            <person name="Rhee J.H."/>
            <person name="Kim S.Y."/>
            <person name="Chung S.S."/>
            <person name="Kim J.J."/>
            <person name="Moon Y.H."/>
            <person name="Jeong H."/>
            <person name="Choy H.E."/>
        </authorList>
    </citation>
    <scope>NUCLEOTIDE SEQUENCE [LARGE SCALE GENOMIC DNA]</scope>
    <source>
        <strain>CMCP6</strain>
    </source>
</reference>
<feature type="chain" id="PRO_0000070360" description="Macrodomain Ter protein">
    <location>
        <begin position="1"/>
        <end position="149"/>
    </location>
</feature>
<evidence type="ECO:0000255" key="1">
    <source>
        <dbReference type="HAMAP-Rule" id="MF_01073"/>
    </source>
</evidence>
<comment type="function">
    <text evidence="1">Required for spatial organization of the terminus region of the chromosome (Ter macrodomain) during the cell cycle. Prevents early segregation of duplicated Ter macrodomains during cell division. Binds specifically to matS, which is a 13 bp signature motif repeated within the Ter macrodomain.</text>
</comment>
<comment type="subunit">
    <text evidence="1">Homodimer.</text>
</comment>
<comment type="subcellular location">
    <subcellularLocation>
        <location evidence="1">Cytoplasm</location>
    </subcellularLocation>
</comment>
<comment type="similarity">
    <text evidence="1">Belongs to the MatP family.</text>
</comment>
<organism>
    <name type="scientific">Vibrio vulnificus (strain CMCP6)</name>
    <dbReference type="NCBI Taxonomy" id="216895"/>
    <lineage>
        <taxon>Bacteria</taxon>
        <taxon>Pseudomonadati</taxon>
        <taxon>Pseudomonadota</taxon>
        <taxon>Gammaproteobacteria</taxon>
        <taxon>Vibrionales</taxon>
        <taxon>Vibrionaceae</taxon>
        <taxon>Vibrio</taxon>
    </lineage>
</organism>
<name>MATP_VIBVU</name>
<keyword id="KW-0131">Cell cycle</keyword>
<keyword id="KW-0132">Cell division</keyword>
<keyword id="KW-0963">Cytoplasm</keyword>
<keyword id="KW-0238">DNA-binding</keyword>
<gene>
    <name evidence="1" type="primary">matP</name>
    <name type="ordered locus">VV1_2627</name>
</gene>
<protein>
    <recommendedName>
        <fullName evidence="1">Macrodomain Ter protein</fullName>
    </recommendedName>
</protein>
<dbReference type="EMBL" id="AE016795">
    <property type="protein sequence ID" value="AAO10975.1"/>
    <property type="molecule type" value="Genomic_DNA"/>
</dbReference>
<dbReference type="RefSeq" id="WP_011080472.1">
    <property type="nucleotide sequence ID" value="NC_004459.3"/>
</dbReference>
<dbReference type="SMR" id="Q8D9H5"/>
<dbReference type="KEGG" id="vvu:VV1_2627"/>
<dbReference type="HOGENOM" id="CLU_142157_0_0_6"/>
<dbReference type="Proteomes" id="UP000002275">
    <property type="component" value="Chromosome 1"/>
</dbReference>
<dbReference type="GO" id="GO:0005737">
    <property type="term" value="C:cytoplasm"/>
    <property type="evidence" value="ECO:0007669"/>
    <property type="project" value="UniProtKB-SubCell"/>
</dbReference>
<dbReference type="GO" id="GO:0043565">
    <property type="term" value="F:sequence-specific DNA binding"/>
    <property type="evidence" value="ECO:0007669"/>
    <property type="project" value="UniProtKB-UniRule"/>
</dbReference>
<dbReference type="GO" id="GO:0051301">
    <property type="term" value="P:cell division"/>
    <property type="evidence" value="ECO:0007669"/>
    <property type="project" value="UniProtKB-UniRule"/>
</dbReference>
<dbReference type="GO" id="GO:0006355">
    <property type="term" value="P:regulation of DNA-templated transcription"/>
    <property type="evidence" value="ECO:0007669"/>
    <property type="project" value="InterPro"/>
</dbReference>
<dbReference type="Gene3D" id="1.20.1270.380">
    <property type="entry name" value="MatP, N-terminal domain"/>
    <property type="match status" value="1"/>
</dbReference>
<dbReference type="Gene3D" id="1.10.1220.10">
    <property type="entry name" value="Met repressor-like"/>
    <property type="match status" value="1"/>
</dbReference>
<dbReference type="HAMAP" id="MF_01073">
    <property type="entry name" value="MatP"/>
    <property type="match status" value="1"/>
</dbReference>
<dbReference type="InterPro" id="IPR013321">
    <property type="entry name" value="Arc_rbn_hlx_hlx"/>
</dbReference>
<dbReference type="InterPro" id="IPR009390">
    <property type="entry name" value="MatP"/>
</dbReference>
<dbReference type="InterPro" id="IPR035375">
    <property type="entry name" value="MatP_C"/>
</dbReference>
<dbReference type="InterPro" id="IPR035087">
    <property type="entry name" value="MatP_N"/>
</dbReference>
<dbReference type="InterPro" id="IPR038339">
    <property type="entry name" value="MatP_N_sf"/>
</dbReference>
<dbReference type="NCBIfam" id="NF003471">
    <property type="entry name" value="PRK05097.1"/>
    <property type="match status" value="1"/>
</dbReference>
<dbReference type="Pfam" id="PF06303">
    <property type="entry name" value="MatP"/>
    <property type="match status" value="1"/>
</dbReference>
<dbReference type="Pfam" id="PF17414">
    <property type="entry name" value="MatP_C"/>
    <property type="match status" value="1"/>
</dbReference>
<proteinExistence type="inferred from homology"/>